<accession>B8GWN0</accession>
<dbReference type="EC" id="2.8.1.10" evidence="1"/>
<dbReference type="EMBL" id="CP001340">
    <property type="protein sequence ID" value="ACL95422.1"/>
    <property type="molecule type" value="Genomic_DNA"/>
</dbReference>
<dbReference type="RefSeq" id="WP_010919746.1">
    <property type="nucleotide sequence ID" value="NC_011916.1"/>
</dbReference>
<dbReference type="RefSeq" id="YP_002517330.1">
    <property type="nucleotide sequence ID" value="NC_011916.1"/>
</dbReference>
<dbReference type="SMR" id="B8GWN0"/>
<dbReference type="GeneID" id="7330097"/>
<dbReference type="KEGG" id="ccs:CCNA_01957"/>
<dbReference type="PATRIC" id="fig|565050.3.peg.1916"/>
<dbReference type="HOGENOM" id="CLU_062233_1_0_5"/>
<dbReference type="OrthoDB" id="9805935at2"/>
<dbReference type="PhylomeDB" id="B8GWN0"/>
<dbReference type="UniPathway" id="UPA00060"/>
<dbReference type="Proteomes" id="UP000001364">
    <property type="component" value="Chromosome"/>
</dbReference>
<dbReference type="GO" id="GO:0005737">
    <property type="term" value="C:cytoplasm"/>
    <property type="evidence" value="ECO:0007669"/>
    <property type="project" value="UniProtKB-SubCell"/>
</dbReference>
<dbReference type="GO" id="GO:1990107">
    <property type="term" value="F:thiazole synthase activity"/>
    <property type="evidence" value="ECO:0007669"/>
    <property type="project" value="UniProtKB-EC"/>
</dbReference>
<dbReference type="GO" id="GO:0009229">
    <property type="term" value="P:thiamine diphosphate biosynthetic process"/>
    <property type="evidence" value="ECO:0007669"/>
    <property type="project" value="UniProtKB-UniRule"/>
</dbReference>
<dbReference type="CDD" id="cd04728">
    <property type="entry name" value="ThiG"/>
    <property type="match status" value="1"/>
</dbReference>
<dbReference type="Gene3D" id="3.20.20.70">
    <property type="entry name" value="Aldolase class I"/>
    <property type="match status" value="1"/>
</dbReference>
<dbReference type="HAMAP" id="MF_00443">
    <property type="entry name" value="ThiG"/>
    <property type="match status" value="1"/>
</dbReference>
<dbReference type="InterPro" id="IPR013785">
    <property type="entry name" value="Aldolase_TIM"/>
</dbReference>
<dbReference type="InterPro" id="IPR033983">
    <property type="entry name" value="Thiazole_synthase_ThiG"/>
</dbReference>
<dbReference type="InterPro" id="IPR008867">
    <property type="entry name" value="ThiG"/>
</dbReference>
<dbReference type="PANTHER" id="PTHR34266">
    <property type="entry name" value="THIAZOLE SYNTHASE"/>
    <property type="match status" value="1"/>
</dbReference>
<dbReference type="PANTHER" id="PTHR34266:SF2">
    <property type="entry name" value="THIAZOLE SYNTHASE"/>
    <property type="match status" value="1"/>
</dbReference>
<dbReference type="Pfam" id="PF05690">
    <property type="entry name" value="ThiG"/>
    <property type="match status" value="1"/>
</dbReference>
<dbReference type="SUPFAM" id="SSF110399">
    <property type="entry name" value="ThiG-like"/>
    <property type="match status" value="1"/>
</dbReference>
<evidence type="ECO:0000255" key="1">
    <source>
        <dbReference type="HAMAP-Rule" id="MF_00443"/>
    </source>
</evidence>
<feature type="chain" id="PRO_1000196841" description="Thiazole synthase">
    <location>
        <begin position="1"/>
        <end position="269"/>
    </location>
</feature>
<feature type="active site" description="Schiff-base intermediate with DXP" evidence="1">
    <location>
        <position position="112"/>
    </location>
</feature>
<feature type="binding site" evidence="1">
    <location>
        <position position="173"/>
    </location>
    <ligand>
        <name>1-deoxy-D-xylulose 5-phosphate</name>
        <dbReference type="ChEBI" id="CHEBI:57792"/>
    </ligand>
</feature>
<feature type="binding site" evidence="1">
    <location>
        <begin position="199"/>
        <end position="200"/>
    </location>
    <ligand>
        <name>1-deoxy-D-xylulose 5-phosphate</name>
        <dbReference type="ChEBI" id="CHEBI:57792"/>
    </ligand>
</feature>
<feature type="binding site" evidence="1">
    <location>
        <begin position="221"/>
        <end position="222"/>
    </location>
    <ligand>
        <name>1-deoxy-D-xylulose 5-phosphate</name>
        <dbReference type="ChEBI" id="CHEBI:57792"/>
    </ligand>
</feature>
<gene>
    <name evidence="1" type="primary">thiG</name>
    <name type="ordered locus">CCNA_01957</name>
</gene>
<comment type="function">
    <text evidence="1">Catalyzes the rearrangement of 1-deoxy-D-xylulose 5-phosphate (DXP) to produce the thiazole phosphate moiety of thiamine. Sulfur is provided by the thiocarboxylate moiety of the carrier protein ThiS. In vitro, sulfur can be provided by H(2)S.</text>
</comment>
<comment type="catalytic activity">
    <reaction evidence="1">
        <text>[ThiS sulfur-carrier protein]-C-terminal-Gly-aminoethanethioate + 2-iminoacetate + 1-deoxy-D-xylulose 5-phosphate = [ThiS sulfur-carrier protein]-C-terminal Gly-Gly + 2-[(2R,5Z)-2-carboxy-4-methylthiazol-5(2H)-ylidene]ethyl phosphate + 2 H2O + H(+)</text>
        <dbReference type="Rhea" id="RHEA:26297"/>
        <dbReference type="Rhea" id="RHEA-COMP:12909"/>
        <dbReference type="Rhea" id="RHEA-COMP:19908"/>
        <dbReference type="ChEBI" id="CHEBI:15377"/>
        <dbReference type="ChEBI" id="CHEBI:15378"/>
        <dbReference type="ChEBI" id="CHEBI:57792"/>
        <dbReference type="ChEBI" id="CHEBI:62899"/>
        <dbReference type="ChEBI" id="CHEBI:77846"/>
        <dbReference type="ChEBI" id="CHEBI:90778"/>
        <dbReference type="ChEBI" id="CHEBI:232372"/>
        <dbReference type="EC" id="2.8.1.10"/>
    </reaction>
</comment>
<comment type="pathway">
    <text evidence="1">Cofactor biosynthesis; thiamine diphosphate biosynthesis.</text>
</comment>
<comment type="subunit">
    <text evidence="1">Homotetramer. Forms heterodimers with either ThiH or ThiS.</text>
</comment>
<comment type="subcellular location">
    <subcellularLocation>
        <location evidence="1">Cytoplasm</location>
    </subcellularLocation>
</comment>
<comment type="similarity">
    <text evidence="1">Belongs to the ThiG family.</text>
</comment>
<sequence>MNAHVTPDSVTADSDETWTVAGRTFRSRLIVGTGKYKDYATNAAAARAAGAEIVTVAVRRVNLTDPSQPLLVDYVKPTEFTYLPNTAGCFTGEDAVRTLRLAREAGGWDLVKLEVLSDPKTLFPDMEETLRSLKLLVADGFQVMVYCSDDPVYARKLEEAGAVAIMPLGAPIGSGLGIQNRVNLRIIIENAKVPVLVDAGVGTASDAAIGMELGCDAILMNTAIAEAKDPIRMAKAMKHAVIAGREAYLAGRMQKRLYADPSSPLAGLI</sequence>
<keyword id="KW-0963">Cytoplasm</keyword>
<keyword id="KW-1185">Reference proteome</keyword>
<keyword id="KW-0704">Schiff base</keyword>
<keyword id="KW-0784">Thiamine biosynthesis</keyword>
<keyword id="KW-0808">Transferase</keyword>
<proteinExistence type="inferred from homology"/>
<organism>
    <name type="scientific">Caulobacter vibrioides (strain NA1000 / CB15N)</name>
    <name type="common">Caulobacter crescentus</name>
    <dbReference type="NCBI Taxonomy" id="565050"/>
    <lineage>
        <taxon>Bacteria</taxon>
        <taxon>Pseudomonadati</taxon>
        <taxon>Pseudomonadota</taxon>
        <taxon>Alphaproteobacteria</taxon>
        <taxon>Caulobacterales</taxon>
        <taxon>Caulobacteraceae</taxon>
        <taxon>Caulobacter</taxon>
    </lineage>
</organism>
<name>THIG_CAUVN</name>
<reference key="1">
    <citation type="journal article" date="2010" name="J. Bacteriol.">
        <title>The genetic basis of laboratory adaptation in Caulobacter crescentus.</title>
        <authorList>
            <person name="Marks M.E."/>
            <person name="Castro-Rojas C.M."/>
            <person name="Teiling C."/>
            <person name="Du L."/>
            <person name="Kapatral V."/>
            <person name="Walunas T.L."/>
            <person name="Crosson S."/>
        </authorList>
    </citation>
    <scope>NUCLEOTIDE SEQUENCE [LARGE SCALE GENOMIC DNA]</scope>
    <source>
        <strain>NA1000 / CB15N</strain>
    </source>
</reference>
<protein>
    <recommendedName>
        <fullName evidence="1">Thiazole synthase</fullName>
        <ecNumber evidence="1">2.8.1.10</ecNumber>
    </recommendedName>
</protein>